<accession>A1KNP6</accession>
<dbReference type="EMBL" id="AM408590">
    <property type="protein sequence ID" value="CAL73262.1"/>
    <property type="status" value="ALT_INIT"/>
    <property type="molecule type" value="Genomic_DNA"/>
</dbReference>
<dbReference type="SMR" id="A1KNP6"/>
<dbReference type="KEGG" id="mbb:BCG_3273c"/>
<dbReference type="HOGENOM" id="CLU_032207_1_0_11"/>
<dbReference type="Proteomes" id="UP000001472">
    <property type="component" value="Chromosome"/>
</dbReference>
<dbReference type="GO" id="GO:0005886">
    <property type="term" value="C:plasma membrane"/>
    <property type="evidence" value="ECO:0007669"/>
    <property type="project" value="UniProtKB-SubCell"/>
</dbReference>
<dbReference type="HAMAP" id="MF_01373">
    <property type="entry name" value="LpqB_lipoprot"/>
    <property type="match status" value="1"/>
</dbReference>
<dbReference type="InterPro" id="IPR019606">
    <property type="entry name" value="GerMN"/>
</dbReference>
<dbReference type="InterPro" id="IPR023959">
    <property type="entry name" value="Lipoprotein_LpqB"/>
</dbReference>
<dbReference type="InterPro" id="IPR018910">
    <property type="entry name" value="Lipoprotein_LpqB_C"/>
</dbReference>
<dbReference type="NCBIfam" id="NF010141">
    <property type="entry name" value="PRK13616.1"/>
    <property type="match status" value="1"/>
</dbReference>
<dbReference type="Pfam" id="PF10646">
    <property type="entry name" value="Germane"/>
    <property type="match status" value="1"/>
</dbReference>
<dbReference type="Pfam" id="PF10647">
    <property type="entry name" value="Gmad1"/>
    <property type="match status" value="1"/>
</dbReference>
<dbReference type="SMART" id="SM00909">
    <property type="entry name" value="Germane"/>
    <property type="match status" value="1"/>
</dbReference>
<dbReference type="SUPFAM" id="SSF69304">
    <property type="entry name" value="Tricorn protease N-terminal domain"/>
    <property type="match status" value="1"/>
</dbReference>
<dbReference type="PROSITE" id="PS51257">
    <property type="entry name" value="PROKAR_LIPOPROTEIN"/>
    <property type="match status" value="1"/>
</dbReference>
<organism>
    <name type="scientific">Mycobacterium bovis (strain BCG / Pasteur 1173P2)</name>
    <dbReference type="NCBI Taxonomy" id="410289"/>
    <lineage>
        <taxon>Bacteria</taxon>
        <taxon>Bacillati</taxon>
        <taxon>Actinomycetota</taxon>
        <taxon>Actinomycetes</taxon>
        <taxon>Mycobacteriales</taxon>
        <taxon>Mycobacteriaceae</taxon>
        <taxon>Mycobacterium</taxon>
        <taxon>Mycobacterium tuberculosis complex</taxon>
    </lineage>
</organism>
<feature type="signal peptide" evidence="1">
    <location>
        <begin position="1"/>
        <end position="19"/>
    </location>
</feature>
<feature type="chain" id="PRO_0000286719" description="Lipoprotein LpqB">
    <location>
        <begin position="20"/>
        <end position="587"/>
    </location>
</feature>
<feature type="lipid moiety-binding region" description="N-palmitoyl cysteine" evidence="1">
    <location>
        <position position="20"/>
    </location>
</feature>
<feature type="lipid moiety-binding region" description="S-diacylglycerol cysteine" evidence="1">
    <location>
        <position position="20"/>
    </location>
</feature>
<reference key="1">
    <citation type="journal article" date="2007" name="Proc. Natl. Acad. Sci. U.S.A.">
        <title>Genome plasticity of BCG and impact on vaccine efficacy.</title>
        <authorList>
            <person name="Brosch R."/>
            <person name="Gordon S.V."/>
            <person name="Garnier T."/>
            <person name="Eiglmeier K."/>
            <person name="Frigui W."/>
            <person name="Valenti P."/>
            <person name="Dos Santos S."/>
            <person name="Duthoy S."/>
            <person name="Lacroix C."/>
            <person name="Garcia-Pelayo C."/>
            <person name="Inwald J.K."/>
            <person name="Golby P."/>
            <person name="Garcia J.N."/>
            <person name="Hewinson R.G."/>
            <person name="Behr M.A."/>
            <person name="Quail M.A."/>
            <person name="Churcher C."/>
            <person name="Barrell B.G."/>
            <person name="Parkhill J."/>
            <person name="Cole S.T."/>
        </authorList>
    </citation>
    <scope>NUCLEOTIDE SEQUENCE [LARGE SCALE GENOMIC DNA]</scope>
    <source>
        <strain>BCG / Pasteur 1173P2</strain>
    </source>
</reference>
<sequence>MERLMRLTILLFLGAVLAGCASVPSTSAPQAIGTVERPVPSNLPKPSPGMDPDVLLREFLKATADPANRHLAARQFLTESASNAWDDAGSALLIDHVVFVETRSAEKVSVTMRADILGSLSDVGVFETAEGQLPDPGPIELVKTSGGWRIDRLPNGVFLDWQQFQETYKRNTLYFADPTGKTVVPDPRYVAVSDRDQLATELVSKLLAGPRPEMARTVRNLLAPPLRLRGPVTRADGGKSGIGRGYGGARVDMEKLSTTDPHSRQLLAAQIIWTLARADIRGPYVINADGAPLEDRFAEGWTTSDVAATDPGVADGAAAGLHALVNGSLVAMDAQRVTPVPGAFGRMPEQTAAAVSRSGRQVASVVTLGRGAPDEAASLWVGDLGGEAVQSADGHSLLRPSWSLDDAVWVVVDTNVVLRAIQDPASGQPARIPVDSTAVASRFPGAINDLQLSRDGTRAAMVIGGQVILAGVEQTQAGQFALTYPRRLGFGLGSSVVSLSWRTGDDIVVTRTDAAHPVSYVNLDGVNSDAPSRGLQTPLTAIAANPSTVYVAGPQGVLMYSASVESRPGWADVPGLMVPGAAPVLPG</sequence>
<proteinExistence type="inferred from homology"/>
<gene>
    <name evidence="1" type="primary">lpqB</name>
    <name type="ordered locus">BCG_3273c</name>
</gene>
<protein>
    <recommendedName>
        <fullName evidence="1">Lipoprotein LpqB</fullName>
    </recommendedName>
</protein>
<name>LPQB_MYCBP</name>
<evidence type="ECO:0000255" key="1">
    <source>
        <dbReference type="HAMAP-Rule" id="MF_01373"/>
    </source>
</evidence>
<evidence type="ECO:0000305" key="2"/>
<comment type="subcellular location">
    <subcellularLocation>
        <location evidence="1">Cell membrane</location>
        <topology evidence="1">Lipid-anchor</topology>
    </subcellularLocation>
</comment>
<comment type="similarity">
    <text evidence="1">Belongs to the LpqB lipoprotein family.</text>
</comment>
<comment type="sequence caution" evidence="2">
    <conflict type="erroneous initiation">
        <sequence resource="EMBL-CDS" id="CAL73262"/>
    </conflict>
</comment>
<keyword id="KW-1003">Cell membrane</keyword>
<keyword id="KW-0449">Lipoprotein</keyword>
<keyword id="KW-0472">Membrane</keyword>
<keyword id="KW-0564">Palmitate</keyword>
<keyword id="KW-0732">Signal</keyword>